<keyword id="KW-0456">Lyase</keyword>
<keyword id="KW-0576">Peroxisome</keyword>
<keyword id="KW-0843">Virulence</keyword>
<organism>
    <name type="scientific">Alternaria alternata</name>
    <name type="common">Alternaria rot fungus</name>
    <name type="synonym">Torula alternata</name>
    <dbReference type="NCBI Taxonomy" id="5599"/>
    <lineage>
        <taxon>Eukaryota</taxon>
        <taxon>Fungi</taxon>
        <taxon>Dikarya</taxon>
        <taxon>Ascomycota</taxon>
        <taxon>Pezizomycotina</taxon>
        <taxon>Dothideomycetes</taxon>
        <taxon>Pleosporomycetidae</taxon>
        <taxon>Pleosporales</taxon>
        <taxon>Pleosporineae</taxon>
        <taxon>Pleosporaceae</taxon>
        <taxon>Alternaria</taxon>
        <taxon>Alternaria sect. Alternaria</taxon>
        <taxon>Alternaria alternata complex</taxon>
    </lineage>
</organism>
<reference key="1">
    <citation type="submission" date="2004-04" db="EMBL/GenBank/DDBJ databases">
        <title>The pathway-specific regulatory protein ACTTR in the tangerine pathotype of Alternaria alternata activates ACTT3 required for ACT-toxin biosynthesis.</title>
        <authorList>
            <person name="Masunaka A."/>
            <person name="Ishikura K."/>
            <person name="Asada K."/>
            <person name="Ohtsuki R."/>
            <person name="Tanaka A."/>
            <person name="Tsuge T."/>
            <person name="Peever T.L."/>
            <person name="Timmer L.W."/>
            <person name="Yamamoto M."/>
            <person name="Yamamoto H."/>
            <person name="Akimitsu K."/>
        </authorList>
    </citation>
    <scope>NUCLEOTIDE SEQUENCE [GENOMIC DNA]</scope>
    <source>
        <strain>SH20</strain>
    </source>
</reference>
<reference key="2">
    <citation type="journal article" date="2009" name="Phytopathology">
        <title>Function of genes encoding acyl-CoA synthetase and enoyl-CoA hydratase for host-selective act-toxin biosynthesis in the tangerine pathotype of Alternaria alternata.</title>
        <authorList>
            <person name="Miyamoto M."/>
            <person name="Ishii Y."/>
            <person name="Honda A."/>
            <person name="Masunaka A."/>
            <person name="Tsuge T."/>
            <person name="Yamamoto M."/>
            <person name="Ohtani K."/>
            <person name="Fukumoto T."/>
            <person name="Gomi K."/>
            <person name="Peever T.L."/>
            <person name="Akimitsu K."/>
        </authorList>
    </citation>
    <scope>NUCLEOTIDE SEQUENCE [GENOMIC DNA]</scope>
    <source>
        <strain>SH20</strain>
    </source>
</reference>
<reference key="3">
    <citation type="journal article" date="2000" name="Phytopathology">
        <title>Distribution and characterization of AKT homologs in the tangerine pathotype of Alternaria alternata.</title>
        <authorList>
            <person name="Masunaka A."/>
            <person name="Tanaka A."/>
            <person name="Tsuge T."/>
            <person name="Peever T.L."/>
            <person name="Timmer L.W."/>
            <person name="Yamamoto M."/>
            <person name="Yamamoto H."/>
            <person name="Akimitsu K."/>
        </authorList>
    </citation>
    <scope>FUNCTION</scope>
</reference>
<reference key="4">
    <citation type="journal article" date="2008" name="Mol. Plant Microbe Interact.">
        <title>Functional analysis of a multicopy host-selective ACT-toxin biosynthesis gene in the tangerine pathotype of Alternaria alternata using RNA silencing.</title>
        <authorList>
            <person name="Miyamoto Y."/>
            <person name="Masunaka A."/>
            <person name="Tsuge T."/>
            <person name="Yamamoto M."/>
            <person name="Ohtani K."/>
            <person name="Fukumoto T."/>
            <person name="Gomi K."/>
            <person name="Peever T.L."/>
            <person name="Akimitsu K."/>
        </authorList>
    </citation>
    <scope>FUNCTION</scope>
    <source>
        <strain>SH20</strain>
    </source>
</reference>
<reference key="5">
    <citation type="journal article" date="2010" name="Phytopathology">
        <title>Role of the host-selective ACT-toxin synthesis gene ACTTS2 encoding an enoyl-reductase in pathogenicity of the tangerine pathotype of Alternaria alternata.</title>
        <authorList>
            <person name="Ajiro N."/>
            <person name="Miyamoto Y."/>
            <person name="Masunaka A."/>
            <person name="Tsuge T."/>
            <person name="Yamamoto M."/>
            <person name="Ohtani K."/>
            <person name="Fukumoto T."/>
            <person name="Gomi K."/>
            <person name="Peever T.L."/>
            <person name="Izumi Y."/>
            <person name="Tada Y."/>
            <person name="Akimitsu K."/>
        </authorList>
    </citation>
    <scope>FUNCTION</scope>
    <source>
        <strain>SH20</strain>
    </source>
</reference>
<reference key="6">
    <citation type="journal article" date="2010" name="Mol. Plant Microbe Interact.">
        <title>ACTTS3 encoding a polyketide synthase is essential for the biosynthesis of ACT-toxin and pathogenicity in the tangerine pathotype of Alternaria alternata.</title>
        <authorList>
            <person name="Miyamoto Y."/>
            <person name="Masunaka A."/>
            <person name="Tsuge T."/>
            <person name="Yamamoto M."/>
            <person name="Ohtani K."/>
            <person name="Fukumoto T."/>
            <person name="Gomi K."/>
            <person name="Peever T.L."/>
            <person name="Tada Y."/>
            <person name="Ichimura K."/>
            <person name="Akimitsu K."/>
        </authorList>
    </citation>
    <scope>FUNCTION</scope>
    <scope>PATHWAY</scope>
    <source>
        <strain>SH20</strain>
    </source>
</reference>
<reference key="7">
    <citation type="journal article" date="2013" name="FEMS Microbiol. Rev.">
        <title>Host-selective toxins produced by the plant pathogenic fungus Alternaria alternata.</title>
        <authorList>
            <person name="Tsuge T."/>
            <person name="Harimoto Y."/>
            <person name="Akimitsu K."/>
            <person name="Ohtani K."/>
            <person name="Kodama M."/>
            <person name="Akagi Y."/>
            <person name="Egusa M."/>
            <person name="Yamamoto M."/>
            <person name="Otani H."/>
        </authorList>
    </citation>
    <scope>REVIEW ON HOST-SELECTIVE TOXINS</scope>
</reference>
<proteinExistence type="inferred from homology"/>
<protein>
    <recommendedName>
        <fullName evidence="1">Enoyl-CoA hydratase ACTT3</fullName>
        <ecNumber evidence="1">4.2.1.17</ecNumber>
    </recommendedName>
    <alternativeName>
        <fullName evidence="8">ACT-toxin biosynthesis protein 3</fullName>
    </alternativeName>
</protein>
<gene>
    <name evidence="8" type="primary">ACTT3</name>
</gene>
<feature type="chain" id="PRO_0000444833" description="Enoyl-CoA hydratase ACTT3">
    <location>
        <begin position="1"/>
        <end position="296"/>
    </location>
</feature>
<feature type="short sequence motif" description="Peroxisomal targeting signal type 1" evidence="1">
    <location>
        <begin position="294"/>
        <end position="296"/>
    </location>
</feature>
<name>ACTT3_ALTAL</name>
<sequence>MLNRFSYSSNAWHNLRVDGPDADGIAVIVLARSQSRNALTLPMLTDMVQLLSAMDADDSVKCIVFTGEGQFFCSGVDLTEGFGEIGKTRDTHRDAGGKLALAIHNCRKPTIAAINGTAVGVGITMTLPMSIRIAAESAKISFPFVRRGIVADAASSFYLPRLIGYGRALHLFTTGALYPAESGLLHGLFSETVNPASSTLPRALEVARDIAVNASQVGVYLTRDLIYRSLRSPEQAHLLESATLYTRYQSQDFEEGVKSFLEKRRPRFQDTMHEQSGEGVLERGDCVVSLASKPKL</sequence>
<evidence type="ECO:0000250" key="1">
    <source>
        <dbReference type="UniProtKB" id="Q9P4U9"/>
    </source>
</evidence>
<evidence type="ECO:0000269" key="2">
    <source>
    </source>
</evidence>
<evidence type="ECO:0000269" key="3">
    <source>
    </source>
</evidence>
<evidence type="ECO:0000269" key="4">
    <source>
    </source>
</evidence>
<evidence type="ECO:0000269" key="5">
    <source>
    </source>
</evidence>
<evidence type="ECO:0000269" key="6">
    <source>
    </source>
</evidence>
<evidence type="ECO:0000303" key="7">
    <source>
    </source>
</evidence>
<evidence type="ECO:0000303" key="8">
    <source ref="1"/>
</evidence>
<evidence type="ECO:0000305" key="9"/>
<evidence type="ECO:0000305" key="10">
    <source>
    </source>
</evidence>
<dbReference type="EC" id="4.2.1.17" evidence="1"/>
<dbReference type="EMBL" id="AB176852">
    <property type="protein sequence ID" value="BAD93201.1"/>
    <property type="molecule type" value="Genomic_DNA"/>
</dbReference>
<dbReference type="EMBL" id="AB176941">
    <property type="protein sequence ID" value="BAD93203.1"/>
    <property type="molecule type" value="Genomic_DNA"/>
</dbReference>
<dbReference type="SMR" id="Q589W8"/>
<dbReference type="VEuPathDB" id="FungiDB:CC77DRAFT_1025015"/>
<dbReference type="GO" id="GO:0005777">
    <property type="term" value="C:peroxisome"/>
    <property type="evidence" value="ECO:0007669"/>
    <property type="project" value="UniProtKB-SubCell"/>
</dbReference>
<dbReference type="GO" id="GO:0004300">
    <property type="term" value="F:enoyl-CoA hydratase activity"/>
    <property type="evidence" value="ECO:0007669"/>
    <property type="project" value="UniProtKB-EC"/>
</dbReference>
<dbReference type="CDD" id="cd06558">
    <property type="entry name" value="crotonase-like"/>
    <property type="match status" value="1"/>
</dbReference>
<dbReference type="Gene3D" id="3.90.226.10">
    <property type="entry name" value="2-enoyl-CoA Hydratase, Chain A, domain 1"/>
    <property type="match status" value="1"/>
</dbReference>
<dbReference type="InterPro" id="IPR029045">
    <property type="entry name" value="ClpP/crotonase-like_dom_sf"/>
</dbReference>
<dbReference type="InterPro" id="IPR051053">
    <property type="entry name" value="ECH/Chromodomain_protein"/>
</dbReference>
<dbReference type="InterPro" id="IPR001753">
    <property type="entry name" value="Enoyl-CoA_hydra/iso"/>
</dbReference>
<dbReference type="PANTHER" id="PTHR43684">
    <property type="match status" value="1"/>
</dbReference>
<dbReference type="PANTHER" id="PTHR43684:SF4">
    <property type="entry name" value="ENOYL-COA HYDRATASE_ISOMERASE FAMILY PROTEIN (AFU_ORTHOLOGUE AFUA_1G01890)"/>
    <property type="match status" value="1"/>
</dbReference>
<dbReference type="Pfam" id="PF00378">
    <property type="entry name" value="ECH_1"/>
    <property type="match status" value="1"/>
</dbReference>
<dbReference type="SUPFAM" id="SSF52096">
    <property type="entry name" value="ClpP/crotonase"/>
    <property type="match status" value="1"/>
</dbReference>
<accession>Q589W8</accession>
<comment type="function">
    <text evidence="2 3 4 5 6 7">Enoyl-CoA hydratase; part of the gene clusters that mediate the biosynthesis of the host-selective toxins (HSTs) ACT-toxins responsible for brown spot of tangerine disease by the tangerine pathotype which affects tangerines and mandarins (PubMed:18944496, PubMed:18986255). ACT-toxins consist of three moieties, 9,10-epoxy-8-hydroxy-9-methyl-decatrienoic acid (EDA), valine and a polyketide (PubMed:22846083). ACT-toxin I is toxic to both citrus and pear; toxin II the 5''-deoxy derivative of ACT-toxin I, is highly toxic to pear and slightly toxic to citrus (PubMed:22846083). On cellular level, ACT-toxins affect plasma membrane of susceptible cells and cause a sudden increase in loss of K(+) after a few minutes of toxin treatment (PubMed:22846083). The acyl-CoA ligase ACTT1, the hydrolase ACTT2, the enoyl-CoA hydratases ACTT3 and ACTT6, and the acyl-CoA synthetase ACTT5 are all involved in the biosynthesis of the AK-, AF- and ACT-toxin common 9,10-epoxy-8-hydroxy-9-methyl-decatrienoic acid (EDA) structural moiety (PubMed:18944496, PubMed:18986255, PubMed:19271978). The exact role of each enzyme, and of additional enzymes identified within the AF-toxin clusters have still to be determined (PubMed:18944496, PubMed:18986255, PubMed:19271978). On the other hand, ACTTS1 to ACTTS4 are specific to the tangerine pathotype (PubMed:22846083). The function of ACTTS3 is to elongate the polyketide chain portion of ACT-toxin that is unique to this toxin (PubMed:20192828). The enoyl-reductase ACTTS2 might complement the missing enoyl-reductase (ER) domain in ACTTS3 in the synthesis of the polyketide portion of ACT-toxin (PubMed:20055645). The roles of the nonribosomal peptide synthetases-related proteins ACTTS1 and ACTTS4 have also still not been elucidated (PubMed:22846083).</text>
</comment>
<comment type="catalytic activity">
    <reaction evidence="1">
        <text>a (3S)-3-hydroxyacyl-CoA = a (2E)-enoyl-CoA + H2O</text>
        <dbReference type="Rhea" id="RHEA:16105"/>
        <dbReference type="ChEBI" id="CHEBI:15377"/>
        <dbReference type="ChEBI" id="CHEBI:57318"/>
        <dbReference type="ChEBI" id="CHEBI:58856"/>
        <dbReference type="EC" id="4.2.1.17"/>
    </reaction>
</comment>
<comment type="catalytic activity">
    <reaction evidence="1">
        <text>a 4-saturated-(3S)-3-hydroxyacyl-CoA = a (3E)-enoyl-CoA + H2O</text>
        <dbReference type="Rhea" id="RHEA:20724"/>
        <dbReference type="ChEBI" id="CHEBI:15377"/>
        <dbReference type="ChEBI" id="CHEBI:58521"/>
        <dbReference type="ChEBI" id="CHEBI:137480"/>
        <dbReference type="EC" id="4.2.1.17"/>
    </reaction>
</comment>
<comment type="pathway">
    <text evidence="10">Mycotoxin biosynthesis.</text>
</comment>
<comment type="subcellular location">
    <subcellularLocation>
        <location evidence="1">Peroxisome</location>
    </subcellularLocation>
    <text evidence="1">The peroxisomal location requires the C-terminal tripeptide peroxisomal targeting signal.</text>
</comment>
<comment type="miscellaneous">
    <text evidence="3">Gene clusters encoding host-selective toxins (HSTs) are localized on conditionally dispensable chromosomes (CDCs), also called supernumerary chromosomes, where they are present in multiple copies (PubMed:18986255). The CDCs are not essential for saprophytic growth but controls host-selective pathogenicity (PubMed:18986255). Although conventional disruption could not be accomplished due to the high number of the copies identified in the genome, the high sequence identity among these copies is likely an advantage for RNA silencing, because it allows knockdown of all copies of this gene simultaneously (PubMed:18986255).</text>
</comment>
<comment type="similarity">
    <text evidence="9">Belongs to the enoyl-CoA hydratase/isomerase family.</text>
</comment>